<proteinExistence type="inferred from homology"/>
<organism>
    <name type="scientific">Desulfovibrio desulfuricans (strain ATCC 27774 / DSM 6949 / MB)</name>
    <dbReference type="NCBI Taxonomy" id="525146"/>
    <lineage>
        <taxon>Bacteria</taxon>
        <taxon>Pseudomonadati</taxon>
        <taxon>Thermodesulfobacteriota</taxon>
        <taxon>Desulfovibrionia</taxon>
        <taxon>Desulfovibrionales</taxon>
        <taxon>Desulfovibrionaceae</taxon>
        <taxon>Desulfovibrio</taxon>
    </lineage>
</organism>
<gene>
    <name evidence="1" type="primary">glyQ</name>
    <name type="ordered locus">Ddes_0915</name>
</gene>
<protein>
    <recommendedName>
        <fullName evidence="1">Glycine--tRNA ligase alpha subunit</fullName>
        <ecNumber evidence="1">6.1.1.14</ecNumber>
    </recommendedName>
    <alternativeName>
        <fullName evidence="1">Glycyl-tRNA synthetase alpha subunit</fullName>
        <shortName evidence="1">GlyRS</shortName>
    </alternativeName>
</protein>
<name>SYGA_DESDA</name>
<reference key="1">
    <citation type="submission" date="2009-01" db="EMBL/GenBank/DDBJ databases">
        <title>Complete sequence of Desulfovibrio desulfuricans subsp. desulfuricans str. ATCC 27774.</title>
        <authorList>
            <consortium name="US DOE Joint Genome Institute"/>
            <person name="Lucas S."/>
            <person name="Copeland A."/>
            <person name="Lapidus A."/>
            <person name="Glavina del Rio T."/>
            <person name="Tice H."/>
            <person name="Bruce D."/>
            <person name="Goodwin L."/>
            <person name="Pitluck S."/>
            <person name="Sims D."/>
            <person name="Lu M."/>
            <person name="Kiss H."/>
            <person name="Meineke L."/>
            <person name="Brettin T."/>
            <person name="Detter J.C."/>
            <person name="Han C."/>
            <person name="Larimer F."/>
            <person name="Land M."/>
            <person name="Hauser L."/>
            <person name="Kyrpides N."/>
            <person name="Ovchinnikova G."/>
            <person name="Hazen T.C."/>
        </authorList>
    </citation>
    <scope>NUCLEOTIDE SEQUENCE [LARGE SCALE GENOMIC DNA]</scope>
    <source>
        <strain>ATCC 27774 / DSM 6949 / MB</strain>
    </source>
</reference>
<feature type="chain" id="PRO_1000125544" description="Glycine--tRNA ligase alpha subunit">
    <location>
        <begin position="1"/>
        <end position="292"/>
    </location>
</feature>
<dbReference type="EC" id="6.1.1.14" evidence="1"/>
<dbReference type="EMBL" id="CP001358">
    <property type="protein sequence ID" value="ACL48822.1"/>
    <property type="molecule type" value="Genomic_DNA"/>
</dbReference>
<dbReference type="SMR" id="B8IZ95"/>
<dbReference type="STRING" id="525146.Ddes_0915"/>
<dbReference type="KEGG" id="dds:Ddes_0915"/>
<dbReference type="eggNOG" id="COG0752">
    <property type="taxonomic scope" value="Bacteria"/>
</dbReference>
<dbReference type="HOGENOM" id="CLU_057066_1_0_7"/>
<dbReference type="GO" id="GO:0005829">
    <property type="term" value="C:cytosol"/>
    <property type="evidence" value="ECO:0007669"/>
    <property type="project" value="TreeGrafter"/>
</dbReference>
<dbReference type="GO" id="GO:0005524">
    <property type="term" value="F:ATP binding"/>
    <property type="evidence" value="ECO:0007669"/>
    <property type="project" value="UniProtKB-UniRule"/>
</dbReference>
<dbReference type="GO" id="GO:0004820">
    <property type="term" value="F:glycine-tRNA ligase activity"/>
    <property type="evidence" value="ECO:0007669"/>
    <property type="project" value="UniProtKB-UniRule"/>
</dbReference>
<dbReference type="GO" id="GO:0006426">
    <property type="term" value="P:glycyl-tRNA aminoacylation"/>
    <property type="evidence" value="ECO:0007669"/>
    <property type="project" value="UniProtKB-UniRule"/>
</dbReference>
<dbReference type="CDD" id="cd00733">
    <property type="entry name" value="GlyRS_alpha_core"/>
    <property type="match status" value="1"/>
</dbReference>
<dbReference type="FunFam" id="3.30.930.10:FF:000006">
    <property type="entry name" value="Glycine--tRNA ligase alpha subunit"/>
    <property type="match status" value="1"/>
</dbReference>
<dbReference type="Gene3D" id="3.30.930.10">
    <property type="entry name" value="Bira Bifunctional Protein, Domain 2"/>
    <property type="match status" value="1"/>
</dbReference>
<dbReference type="Gene3D" id="1.20.58.180">
    <property type="entry name" value="Class II aaRS and biotin synthetases, domain 2"/>
    <property type="match status" value="1"/>
</dbReference>
<dbReference type="HAMAP" id="MF_00254">
    <property type="entry name" value="Gly_tRNA_synth_alpha"/>
    <property type="match status" value="1"/>
</dbReference>
<dbReference type="InterPro" id="IPR045864">
    <property type="entry name" value="aa-tRNA-synth_II/BPL/LPL"/>
</dbReference>
<dbReference type="InterPro" id="IPR006194">
    <property type="entry name" value="Gly-tRNA-synth_heterodimer"/>
</dbReference>
<dbReference type="InterPro" id="IPR002310">
    <property type="entry name" value="Gly-tRNA_ligase_asu"/>
</dbReference>
<dbReference type="NCBIfam" id="TIGR00388">
    <property type="entry name" value="glyQ"/>
    <property type="match status" value="1"/>
</dbReference>
<dbReference type="NCBIfam" id="NF006827">
    <property type="entry name" value="PRK09348.1"/>
    <property type="match status" value="1"/>
</dbReference>
<dbReference type="PANTHER" id="PTHR30075:SF2">
    <property type="entry name" value="GLYCINE--TRNA LIGASE, CHLOROPLASTIC_MITOCHONDRIAL 2"/>
    <property type="match status" value="1"/>
</dbReference>
<dbReference type="PANTHER" id="PTHR30075">
    <property type="entry name" value="GLYCYL-TRNA SYNTHETASE"/>
    <property type="match status" value="1"/>
</dbReference>
<dbReference type="Pfam" id="PF02091">
    <property type="entry name" value="tRNA-synt_2e"/>
    <property type="match status" value="1"/>
</dbReference>
<dbReference type="PRINTS" id="PR01044">
    <property type="entry name" value="TRNASYNTHGA"/>
</dbReference>
<dbReference type="SUPFAM" id="SSF55681">
    <property type="entry name" value="Class II aaRS and biotin synthetases"/>
    <property type="match status" value="1"/>
</dbReference>
<dbReference type="PROSITE" id="PS50861">
    <property type="entry name" value="AA_TRNA_LIGASE_II_GLYAB"/>
    <property type="match status" value="1"/>
</dbReference>
<sequence length="292" mass="33396">MYFQDVILTLQNYWARQGCVIEQPSGVECGAGTFNPHTFLRVIGPEPWNVAYVEPSRRPTDGRYGENPNRLQRYFQFQVIMKPSPDNVQDLYLQSLNALGINPAQHDIRFVEDDWESPTLGAWGLGWEVWLNGMEVSQFTYFQQVGGIDLAPVSVELTYGLERLAMYLQGVESVYDLAWNKDVTYGNIYHQNEVEQSRHNFEASDAQMLLRHFNDFEGQCKAMLELGLPWPAYDYCLKCSHTFNLLDARGAISITERTGYIGRVRALAAGVARLYAAQREELGYPMLKKDAR</sequence>
<comment type="catalytic activity">
    <reaction evidence="1">
        <text>tRNA(Gly) + glycine + ATP = glycyl-tRNA(Gly) + AMP + diphosphate</text>
        <dbReference type="Rhea" id="RHEA:16013"/>
        <dbReference type="Rhea" id="RHEA-COMP:9664"/>
        <dbReference type="Rhea" id="RHEA-COMP:9683"/>
        <dbReference type="ChEBI" id="CHEBI:30616"/>
        <dbReference type="ChEBI" id="CHEBI:33019"/>
        <dbReference type="ChEBI" id="CHEBI:57305"/>
        <dbReference type="ChEBI" id="CHEBI:78442"/>
        <dbReference type="ChEBI" id="CHEBI:78522"/>
        <dbReference type="ChEBI" id="CHEBI:456215"/>
        <dbReference type="EC" id="6.1.1.14"/>
    </reaction>
</comment>
<comment type="subunit">
    <text evidence="1">Tetramer of two alpha and two beta subunits.</text>
</comment>
<comment type="subcellular location">
    <subcellularLocation>
        <location evidence="1">Cytoplasm</location>
    </subcellularLocation>
</comment>
<comment type="similarity">
    <text evidence="1">Belongs to the class-II aminoacyl-tRNA synthetase family.</text>
</comment>
<evidence type="ECO:0000255" key="1">
    <source>
        <dbReference type="HAMAP-Rule" id="MF_00254"/>
    </source>
</evidence>
<keyword id="KW-0030">Aminoacyl-tRNA synthetase</keyword>
<keyword id="KW-0067">ATP-binding</keyword>
<keyword id="KW-0963">Cytoplasm</keyword>
<keyword id="KW-0436">Ligase</keyword>
<keyword id="KW-0547">Nucleotide-binding</keyword>
<keyword id="KW-0648">Protein biosynthesis</keyword>
<accession>B8IZ95</accession>